<name>RS12_NEIMB</name>
<feature type="chain" id="PRO_0000146275" description="Small ribosomal subunit protein uS12">
    <location>
        <begin position="1"/>
        <end position="123"/>
    </location>
</feature>
<feature type="region of interest" description="Disordered" evidence="2">
    <location>
        <begin position="104"/>
        <end position="123"/>
    </location>
</feature>
<feature type="compositionally biased region" description="Basic residues" evidence="2">
    <location>
        <begin position="113"/>
        <end position="123"/>
    </location>
</feature>
<keyword id="KW-1185">Reference proteome</keyword>
<keyword id="KW-0687">Ribonucleoprotein</keyword>
<keyword id="KW-0689">Ribosomal protein</keyword>
<keyword id="KW-0694">RNA-binding</keyword>
<keyword id="KW-0699">rRNA-binding</keyword>
<keyword id="KW-0820">tRNA-binding</keyword>
<accession>P66375</accession>
<accession>Q9JQR6</accession>
<proteinExistence type="inferred from homology"/>
<reference key="1">
    <citation type="journal article" date="2000" name="Science">
        <title>Complete genome sequence of Neisseria meningitidis serogroup B strain MC58.</title>
        <authorList>
            <person name="Tettelin H."/>
            <person name="Saunders N.J."/>
            <person name="Heidelberg J.F."/>
            <person name="Jeffries A.C."/>
            <person name="Nelson K.E."/>
            <person name="Eisen J.A."/>
            <person name="Ketchum K.A."/>
            <person name="Hood D.W."/>
            <person name="Peden J.F."/>
            <person name="Dodson R.J."/>
            <person name="Nelson W.C."/>
            <person name="Gwinn M.L."/>
            <person name="DeBoy R.T."/>
            <person name="Peterson J.D."/>
            <person name="Hickey E.K."/>
            <person name="Haft D.H."/>
            <person name="Salzberg S.L."/>
            <person name="White O."/>
            <person name="Fleischmann R.D."/>
            <person name="Dougherty B.A."/>
            <person name="Mason T.M."/>
            <person name="Ciecko A."/>
            <person name="Parksey D.S."/>
            <person name="Blair E."/>
            <person name="Cittone H."/>
            <person name="Clark E.B."/>
            <person name="Cotton M.D."/>
            <person name="Utterback T.R."/>
            <person name="Khouri H.M."/>
            <person name="Qin H."/>
            <person name="Vamathevan J.J."/>
            <person name="Gill J."/>
            <person name="Scarlato V."/>
            <person name="Masignani V."/>
            <person name="Pizza M."/>
            <person name="Grandi G."/>
            <person name="Sun L."/>
            <person name="Smith H.O."/>
            <person name="Fraser C.M."/>
            <person name="Moxon E.R."/>
            <person name="Rappuoli R."/>
            <person name="Venter J.C."/>
        </authorList>
    </citation>
    <scope>NUCLEOTIDE SEQUENCE [LARGE SCALE GENOMIC DNA]</scope>
    <source>
        <strain>ATCC BAA-335 / MC58</strain>
    </source>
</reference>
<comment type="function">
    <text evidence="1">With S4 and S5 plays an important role in translational accuracy.</text>
</comment>
<comment type="function">
    <text evidence="1">Interacts with and stabilizes bases of the 16S rRNA that are involved in tRNA selection in the A site and with the mRNA backbone. Located at the interface of the 30S and 50S subunits, it traverses the body of the 30S subunit contacting proteins on the other side and probably holding the rRNA structure together. The combined cluster of proteins S8, S12 and S17 appears to hold together the shoulder and platform of the 30S subunit.</text>
</comment>
<comment type="subunit">
    <text evidence="1">Part of the 30S ribosomal subunit. Contacts proteins S8 and S17. May interact with IF1 in the 30S initiation complex.</text>
</comment>
<comment type="similarity">
    <text evidence="1">Belongs to the universal ribosomal protein uS12 family.</text>
</comment>
<comment type="caution">
    <text evidence="3">Because the enzyme that would modify Asp-89 to 3-methylthioaspartic acid has not been found in the proteome of this organism, that modification is not predicted.</text>
</comment>
<organism>
    <name type="scientific">Neisseria meningitidis serogroup B (strain ATCC BAA-335 / MC58)</name>
    <dbReference type="NCBI Taxonomy" id="122586"/>
    <lineage>
        <taxon>Bacteria</taxon>
        <taxon>Pseudomonadati</taxon>
        <taxon>Pseudomonadota</taxon>
        <taxon>Betaproteobacteria</taxon>
        <taxon>Neisseriales</taxon>
        <taxon>Neisseriaceae</taxon>
        <taxon>Neisseria</taxon>
    </lineage>
</organism>
<protein>
    <recommendedName>
        <fullName evidence="1">Small ribosomal subunit protein uS12</fullName>
    </recommendedName>
    <alternativeName>
        <fullName evidence="3">30S ribosomal protein S12</fullName>
    </alternativeName>
</protein>
<dbReference type="EMBL" id="AE002098">
    <property type="protein sequence ID" value="AAF40595.1"/>
    <property type="molecule type" value="Genomic_DNA"/>
</dbReference>
<dbReference type="PIR" id="A81234">
    <property type="entry name" value="A81234"/>
</dbReference>
<dbReference type="RefSeq" id="NP_273194.1">
    <property type="nucleotide sequence ID" value="NC_003112.2"/>
</dbReference>
<dbReference type="RefSeq" id="WP_002218431.1">
    <property type="nucleotide sequence ID" value="NC_003112.2"/>
</dbReference>
<dbReference type="SMR" id="P66375"/>
<dbReference type="FunCoup" id="P66375">
    <property type="interactions" value="516"/>
</dbReference>
<dbReference type="STRING" id="122586.NMB0136"/>
<dbReference type="PaxDb" id="122586-NMB0136"/>
<dbReference type="GeneID" id="94582015"/>
<dbReference type="KEGG" id="nme:NMB0136"/>
<dbReference type="PATRIC" id="fig|122586.8.peg.176"/>
<dbReference type="HOGENOM" id="CLU_104295_1_2_4"/>
<dbReference type="InParanoid" id="P66375"/>
<dbReference type="OrthoDB" id="9802366at2"/>
<dbReference type="PRO" id="PR:P66375"/>
<dbReference type="Proteomes" id="UP000000425">
    <property type="component" value="Chromosome"/>
</dbReference>
<dbReference type="GO" id="GO:0005840">
    <property type="term" value="C:ribosome"/>
    <property type="evidence" value="ECO:0000318"/>
    <property type="project" value="GO_Central"/>
</dbReference>
<dbReference type="GO" id="GO:0015935">
    <property type="term" value="C:small ribosomal subunit"/>
    <property type="evidence" value="ECO:0007669"/>
    <property type="project" value="InterPro"/>
</dbReference>
<dbReference type="GO" id="GO:0019843">
    <property type="term" value="F:rRNA binding"/>
    <property type="evidence" value="ECO:0007669"/>
    <property type="project" value="UniProtKB-UniRule"/>
</dbReference>
<dbReference type="GO" id="GO:0003735">
    <property type="term" value="F:structural constituent of ribosome"/>
    <property type="evidence" value="ECO:0000318"/>
    <property type="project" value="GO_Central"/>
</dbReference>
<dbReference type="GO" id="GO:0000049">
    <property type="term" value="F:tRNA binding"/>
    <property type="evidence" value="ECO:0007669"/>
    <property type="project" value="UniProtKB-UniRule"/>
</dbReference>
<dbReference type="GO" id="GO:0006412">
    <property type="term" value="P:translation"/>
    <property type="evidence" value="ECO:0000318"/>
    <property type="project" value="GO_Central"/>
</dbReference>
<dbReference type="CDD" id="cd03368">
    <property type="entry name" value="Ribosomal_S12"/>
    <property type="match status" value="1"/>
</dbReference>
<dbReference type="FunFam" id="2.40.50.140:FF:000001">
    <property type="entry name" value="30S ribosomal protein S12"/>
    <property type="match status" value="1"/>
</dbReference>
<dbReference type="Gene3D" id="2.40.50.140">
    <property type="entry name" value="Nucleic acid-binding proteins"/>
    <property type="match status" value="1"/>
</dbReference>
<dbReference type="HAMAP" id="MF_00403_B">
    <property type="entry name" value="Ribosomal_uS12_B"/>
    <property type="match status" value="1"/>
</dbReference>
<dbReference type="InterPro" id="IPR012340">
    <property type="entry name" value="NA-bd_OB-fold"/>
</dbReference>
<dbReference type="InterPro" id="IPR006032">
    <property type="entry name" value="Ribosomal_uS12"/>
</dbReference>
<dbReference type="InterPro" id="IPR005679">
    <property type="entry name" value="Ribosomal_uS12_bac"/>
</dbReference>
<dbReference type="NCBIfam" id="TIGR00981">
    <property type="entry name" value="rpsL_bact"/>
    <property type="match status" value="1"/>
</dbReference>
<dbReference type="PANTHER" id="PTHR11652">
    <property type="entry name" value="30S RIBOSOMAL PROTEIN S12 FAMILY MEMBER"/>
    <property type="match status" value="1"/>
</dbReference>
<dbReference type="Pfam" id="PF00164">
    <property type="entry name" value="Ribosom_S12_S23"/>
    <property type="match status" value="1"/>
</dbReference>
<dbReference type="PIRSF" id="PIRSF002133">
    <property type="entry name" value="Ribosomal_S12/S23"/>
    <property type="match status" value="1"/>
</dbReference>
<dbReference type="PRINTS" id="PR01034">
    <property type="entry name" value="RIBOSOMALS12"/>
</dbReference>
<dbReference type="SUPFAM" id="SSF50249">
    <property type="entry name" value="Nucleic acid-binding proteins"/>
    <property type="match status" value="1"/>
</dbReference>
<dbReference type="PROSITE" id="PS00055">
    <property type="entry name" value="RIBOSOMAL_S12"/>
    <property type="match status" value="1"/>
</dbReference>
<gene>
    <name evidence="1" type="primary">rpsL</name>
    <name type="ordered locus">NMB0136</name>
</gene>
<sequence>MPTINQLVRKGRQKPVYVNKVPALEACPQKRGVCTRVYTTTPKKPNSALRKVCKVRLTNGFEVISYIGGEGHNLQEHSVVLIRGGRVKDLPGVRYHTVRGSLDTAGVKDRKQARSKYGAKRPK</sequence>
<evidence type="ECO:0000255" key="1">
    <source>
        <dbReference type="HAMAP-Rule" id="MF_00403"/>
    </source>
</evidence>
<evidence type="ECO:0000256" key="2">
    <source>
        <dbReference type="SAM" id="MobiDB-lite"/>
    </source>
</evidence>
<evidence type="ECO:0000305" key="3"/>